<reference key="1">
    <citation type="journal article" date="2009" name="J. Bacteriol.">
        <title>Genome sequences of three Agrobacterium biovars help elucidate the evolution of multichromosome genomes in bacteria.</title>
        <authorList>
            <person name="Slater S.C."/>
            <person name="Goldman B.S."/>
            <person name="Goodner B."/>
            <person name="Setubal J.C."/>
            <person name="Farrand S.K."/>
            <person name="Nester E.W."/>
            <person name="Burr T.J."/>
            <person name="Banta L."/>
            <person name="Dickerman A.W."/>
            <person name="Paulsen I."/>
            <person name="Otten L."/>
            <person name="Suen G."/>
            <person name="Welch R."/>
            <person name="Almeida N.F."/>
            <person name="Arnold F."/>
            <person name="Burton O.T."/>
            <person name="Du Z."/>
            <person name="Ewing A."/>
            <person name="Godsy E."/>
            <person name="Heisel S."/>
            <person name="Houmiel K.L."/>
            <person name="Jhaveri J."/>
            <person name="Lu J."/>
            <person name="Miller N.M."/>
            <person name="Norton S."/>
            <person name="Chen Q."/>
            <person name="Phoolcharoen W."/>
            <person name="Ohlin V."/>
            <person name="Ondrusek D."/>
            <person name="Pride N."/>
            <person name="Stricklin S.L."/>
            <person name="Sun J."/>
            <person name="Wheeler C."/>
            <person name="Wilson L."/>
            <person name="Zhu H."/>
            <person name="Wood D.W."/>
        </authorList>
    </citation>
    <scope>NUCLEOTIDE SEQUENCE [LARGE SCALE GENOMIC DNA]</scope>
    <source>
        <strain>ATCC BAA-846 / DSM 112012 / S4</strain>
    </source>
</reference>
<organism>
    <name type="scientific">Allorhizobium ampelinum (strain ATCC BAA-846 / DSM 112012 / S4)</name>
    <name type="common">Agrobacterium vitis (strain S4)</name>
    <dbReference type="NCBI Taxonomy" id="311402"/>
    <lineage>
        <taxon>Bacteria</taxon>
        <taxon>Pseudomonadati</taxon>
        <taxon>Pseudomonadota</taxon>
        <taxon>Alphaproteobacteria</taxon>
        <taxon>Hyphomicrobiales</taxon>
        <taxon>Rhizobiaceae</taxon>
        <taxon>Rhizobium/Agrobacterium group</taxon>
        <taxon>Allorhizobium</taxon>
        <taxon>Allorhizobium ampelinum</taxon>
    </lineage>
</organism>
<accession>B9JT86</accession>
<proteinExistence type="inferred from homology"/>
<protein>
    <recommendedName>
        <fullName evidence="1">Sulfate adenylyltransferase subunit 2</fullName>
        <ecNumber evidence="1">2.7.7.4</ecNumber>
    </recommendedName>
    <alternativeName>
        <fullName evidence="1">ATP-sulfurylase small subunit</fullName>
    </alternativeName>
    <alternativeName>
        <fullName evidence="1">Sulfate adenylate transferase</fullName>
        <shortName evidence="1">SAT</shortName>
    </alternativeName>
</protein>
<evidence type="ECO:0000255" key="1">
    <source>
        <dbReference type="HAMAP-Rule" id="MF_00064"/>
    </source>
</evidence>
<evidence type="ECO:0000256" key="2">
    <source>
        <dbReference type="SAM" id="MobiDB-lite"/>
    </source>
</evidence>
<comment type="function">
    <text evidence="1">With CysN forms the ATP sulfurylase (ATPS) that catalyzes the adenylation of sulfate producing adenosine 5'-phosphosulfate (APS) and diphosphate, the first enzymatic step in sulfur assimilation pathway. APS synthesis involves the formation of a high-energy phosphoric-sulfuric acid anhydride bond driven by GTP hydrolysis by CysN coupled to ATP hydrolysis by CysD.</text>
</comment>
<comment type="catalytic activity">
    <reaction evidence="1">
        <text>sulfate + ATP + H(+) = adenosine 5'-phosphosulfate + diphosphate</text>
        <dbReference type="Rhea" id="RHEA:18133"/>
        <dbReference type="ChEBI" id="CHEBI:15378"/>
        <dbReference type="ChEBI" id="CHEBI:16189"/>
        <dbReference type="ChEBI" id="CHEBI:30616"/>
        <dbReference type="ChEBI" id="CHEBI:33019"/>
        <dbReference type="ChEBI" id="CHEBI:58243"/>
        <dbReference type="EC" id="2.7.7.4"/>
    </reaction>
</comment>
<comment type="pathway">
    <text evidence="1">Sulfur metabolism; hydrogen sulfide biosynthesis; sulfite from sulfate: step 1/3.</text>
</comment>
<comment type="subunit">
    <text evidence="1">Heterodimer composed of CysD, the smaller subunit, and CysN.</text>
</comment>
<comment type="similarity">
    <text evidence="1">Belongs to the PAPS reductase family. CysD subfamily.</text>
</comment>
<sequence>MHQSEFDPHSKEVVARAPLDPHLKALENEAIHIFREVAGEFDNPVMLYSIGKDSSVLLHLARKAFYPGRVPFPLLHIDTGWKFKEMIAFRDEMAKRYDLDLVVHTNPRGKTEGVTPFSHGSALYTDIMKTEALRQALDAGKYDAAFGGARRDEEASRAKERIYSFRTPDHKWDPRNQRPELWNVYNGMIRRGESVRAFPLSNWTEVDIWRYIQAENIPLVPLYFAEKRPFIERDGMMILAEDERLELLPGEKVQHGSIRFRTLGCFPLTGALRSEARTLDDVIAELEIATVSERQGRAIDRDQSGSMEKKKREGYF</sequence>
<keyword id="KW-0067">ATP-binding</keyword>
<keyword id="KW-0547">Nucleotide-binding</keyword>
<keyword id="KW-0548">Nucleotidyltransferase</keyword>
<keyword id="KW-1185">Reference proteome</keyword>
<keyword id="KW-0808">Transferase</keyword>
<gene>
    <name evidence="1" type="primary">cysD</name>
    <name type="ordered locus">Avi_1120</name>
</gene>
<name>CYSD_ALLAM</name>
<feature type="chain" id="PRO_1000117935" description="Sulfate adenylyltransferase subunit 2">
    <location>
        <begin position="1"/>
        <end position="316"/>
    </location>
</feature>
<feature type="region of interest" description="Disordered" evidence="2">
    <location>
        <begin position="297"/>
        <end position="316"/>
    </location>
</feature>
<dbReference type="EC" id="2.7.7.4" evidence="1"/>
<dbReference type="EMBL" id="CP000633">
    <property type="protein sequence ID" value="ACM35799.1"/>
    <property type="molecule type" value="Genomic_DNA"/>
</dbReference>
<dbReference type="SMR" id="B9JT86"/>
<dbReference type="STRING" id="311402.Avi_1120"/>
<dbReference type="KEGG" id="avi:Avi_1120"/>
<dbReference type="eggNOG" id="COG0175">
    <property type="taxonomic scope" value="Bacteria"/>
</dbReference>
<dbReference type="HOGENOM" id="CLU_043026_0_0_5"/>
<dbReference type="UniPathway" id="UPA00140">
    <property type="reaction ID" value="UER00204"/>
</dbReference>
<dbReference type="Proteomes" id="UP000001596">
    <property type="component" value="Chromosome 1"/>
</dbReference>
<dbReference type="GO" id="GO:0005524">
    <property type="term" value="F:ATP binding"/>
    <property type="evidence" value="ECO:0007669"/>
    <property type="project" value="UniProtKB-KW"/>
</dbReference>
<dbReference type="GO" id="GO:0004781">
    <property type="term" value="F:sulfate adenylyltransferase (ATP) activity"/>
    <property type="evidence" value="ECO:0007669"/>
    <property type="project" value="UniProtKB-UniRule"/>
</dbReference>
<dbReference type="GO" id="GO:0070814">
    <property type="term" value="P:hydrogen sulfide biosynthetic process"/>
    <property type="evidence" value="ECO:0007669"/>
    <property type="project" value="UniProtKB-UniRule"/>
</dbReference>
<dbReference type="GO" id="GO:0000103">
    <property type="term" value="P:sulfate assimilation"/>
    <property type="evidence" value="ECO:0007669"/>
    <property type="project" value="UniProtKB-UniRule"/>
</dbReference>
<dbReference type="FunFam" id="3.40.50.620:FF:000002">
    <property type="entry name" value="Sulfate adenylyltransferase subunit 2"/>
    <property type="match status" value="1"/>
</dbReference>
<dbReference type="Gene3D" id="3.40.50.620">
    <property type="entry name" value="HUPs"/>
    <property type="match status" value="1"/>
</dbReference>
<dbReference type="HAMAP" id="MF_00064">
    <property type="entry name" value="Sulf_adenylyltr_sub2"/>
    <property type="match status" value="1"/>
</dbReference>
<dbReference type="InterPro" id="IPR002500">
    <property type="entry name" value="PAPS_reduct_dom"/>
</dbReference>
<dbReference type="InterPro" id="IPR014729">
    <property type="entry name" value="Rossmann-like_a/b/a_fold"/>
</dbReference>
<dbReference type="InterPro" id="IPR011784">
    <property type="entry name" value="SO4_adenylTrfase_ssu"/>
</dbReference>
<dbReference type="InterPro" id="IPR050128">
    <property type="entry name" value="Sulfate_adenylyltrnsfr_sub2"/>
</dbReference>
<dbReference type="NCBIfam" id="TIGR02039">
    <property type="entry name" value="CysD"/>
    <property type="match status" value="1"/>
</dbReference>
<dbReference type="NCBIfam" id="NF003587">
    <property type="entry name" value="PRK05253.1"/>
    <property type="match status" value="1"/>
</dbReference>
<dbReference type="NCBIfam" id="NF009214">
    <property type="entry name" value="PRK12563.1"/>
    <property type="match status" value="1"/>
</dbReference>
<dbReference type="PANTHER" id="PTHR43196">
    <property type="entry name" value="SULFATE ADENYLYLTRANSFERASE SUBUNIT 2"/>
    <property type="match status" value="1"/>
</dbReference>
<dbReference type="PANTHER" id="PTHR43196:SF1">
    <property type="entry name" value="SULFATE ADENYLYLTRANSFERASE SUBUNIT 2"/>
    <property type="match status" value="1"/>
</dbReference>
<dbReference type="Pfam" id="PF01507">
    <property type="entry name" value="PAPS_reduct"/>
    <property type="match status" value="1"/>
</dbReference>
<dbReference type="PIRSF" id="PIRSF002936">
    <property type="entry name" value="CysDAde_trans"/>
    <property type="match status" value="1"/>
</dbReference>
<dbReference type="SUPFAM" id="SSF52402">
    <property type="entry name" value="Adenine nucleotide alpha hydrolases-like"/>
    <property type="match status" value="1"/>
</dbReference>